<evidence type="ECO:0000255" key="1"/>
<evidence type="ECO:0000256" key="2">
    <source>
        <dbReference type="SAM" id="MobiDB-lite"/>
    </source>
</evidence>
<evidence type="ECO:0000305" key="3"/>
<organism>
    <name type="scientific">Arabidopsis thaliana</name>
    <name type="common">Mouse-ear cress</name>
    <dbReference type="NCBI Taxonomy" id="3702"/>
    <lineage>
        <taxon>Eukaryota</taxon>
        <taxon>Viridiplantae</taxon>
        <taxon>Streptophyta</taxon>
        <taxon>Embryophyta</taxon>
        <taxon>Tracheophyta</taxon>
        <taxon>Spermatophyta</taxon>
        <taxon>Magnoliopsida</taxon>
        <taxon>eudicotyledons</taxon>
        <taxon>Gunneridae</taxon>
        <taxon>Pentapetalae</taxon>
        <taxon>rosids</taxon>
        <taxon>malvids</taxon>
        <taxon>Brassicales</taxon>
        <taxon>Brassicaceae</taxon>
        <taxon>Camelineae</taxon>
        <taxon>Arabidopsis</taxon>
    </lineage>
</organism>
<name>PP302_ARATH</name>
<comment type="subcellular location">
    <subcellularLocation>
        <location evidence="3">Mitochondrion</location>
    </subcellularLocation>
</comment>
<comment type="similarity">
    <text evidence="3">Belongs to the PPR family. P subfamily.</text>
</comment>
<comment type="online information" name="Pentatricopeptide repeat proteins">
    <link uri="https://ppr.plantenergy.uwa.edu.au"/>
</comment>
<protein>
    <recommendedName>
        <fullName>Pentatricopeptide repeat-containing protein At4g02820, mitochondrial</fullName>
    </recommendedName>
</protein>
<keyword id="KW-0496">Mitochondrion</keyword>
<keyword id="KW-1185">Reference proteome</keyword>
<keyword id="KW-0677">Repeat</keyword>
<keyword id="KW-0809">Transit peptide</keyword>
<accession>Q9SY07</accession>
<accession>Q8W4P4</accession>
<proteinExistence type="evidence at transcript level"/>
<dbReference type="EMBL" id="AC004044">
    <property type="protein sequence ID" value="AAD15353.1"/>
    <property type="molecule type" value="Genomic_DNA"/>
</dbReference>
<dbReference type="EMBL" id="AL161495">
    <property type="protein sequence ID" value="CAB77767.1"/>
    <property type="molecule type" value="Genomic_DNA"/>
</dbReference>
<dbReference type="EMBL" id="CP002687">
    <property type="protein sequence ID" value="AEE82233.1"/>
    <property type="molecule type" value="Genomic_DNA"/>
</dbReference>
<dbReference type="EMBL" id="AY062445">
    <property type="protein sequence ID" value="AAL32523.1"/>
    <property type="molecule type" value="mRNA"/>
</dbReference>
<dbReference type="EMBL" id="BT002564">
    <property type="protein sequence ID" value="AAO00924.1"/>
    <property type="molecule type" value="mRNA"/>
</dbReference>
<dbReference type="PIR" id="H85035">
    <property type="entry name" value="H85035"/>
</dbReference>
<dbReference type="RefSeq" id="NP_192191.1">
    <property type="nucleotide sequence ID" value="NM_116516.4"/>
</dbReference>
<dbReference type="SMR" id="Q9SY07"/>
<dbReference type="BioGRID" id="13458">
    <property type="interactions" value="1"/>
</dbReference>
<dbReference type="FunCoup" id="Q9SY07">
    <property type="interactions" value="1311"/>
</dbReference>
<dbReference type="IntAct" id="Q9SY07">
    <property type="interactions" value="2"/>
</dbReference>
<dbReference type="STRING" id="3702.Q9SY07"/>
<dbReference type="PaxDb" id="3702-AT4G02820.1"/>
<dbReference type="ProteomicsDB" id="249213"/>
<dbReference type="EnsemblPlants" id="AT4G02820.1">
    <property type="protein sequence ID" value="AT4G02820.1"/>
    <property type="gene ID" value="AT4G02820"/>
</dbReference>
<dbReference type="GeneID" id="828169"/>
<dbReference type="Gramene" id="AT4G02820.1">
    <property type="protein sequence ID" value="AT4G02820.1"/>
    <property type="gene ID" value="AT4G02820"/>
</dbReference>
<dbReference type="KEGG" id="ath:AT4G02820"/>
<dbReference type="Araport" id="AT4G02820"/>
<dbReference type="TAIR" id="AT4G02820"/>
<dbReference type="eggNOG" id="KOG4197">
    <property type="taxonomic scope" value="Eukaryota"/>
</dbReference>
<dbReference type="HOGENOM" id="CLU_019802_3_0_1"/>
<dbReference type="InParanoid" id="Q9SY07"/>
<dbReference type="OMA" id="EICEWMT"/>
<dbReference type="PhylomeDB" id="Q9SY07"/>
<dbReference type="CD-CODE" id="4299E36E">
    <property type="entry name" value="Nucleolus"/>
</dbReference>
<dbReference type="PRO" id="PR:Q9SY07"/>
<dbReference type="Proteomes" id="UP000006548">
    <property type="component" value="Chromosome 4"/>
</dbReference>
<dbReference type="ExpressionAtlas" id="Q9SY07">
    <property type="expression patterns" value="baseline and differential"/>
</dbReference>
<dbReference type="GO" id="GO:0005739">
    <property type="term" value="C:mitochondrion"/>
    <property type="evidence" value="ECO:0007005"/>
    <property type="project" value="TAIR"/>
</dbReference>
<dbReference type="GO" id="GO:0003729">
    <property type="term" value="F:mRNA binding"/>
    <property type="evidence" value="ECO:0007669"/>
    <property type="project" value="UniProtKB-ARBA"/>
</dbReference>
<dbReference type="FunFam" id="1.25.40.10:FF:000253">
    <property type="entry name" value="Pentatricopeptide repeat-containing protein"/>
    <property type="match status" value="1"/>
</dbReference>
<dbReference type="FunFam" id="1.25.40.10:FF:000651">
    <property type="entry name" value="Pentatricopeptide repeat-containing protein mitochondrial"/>
    <property type="match status" value="1"/>
</dbReference>
<dbReference type="FunFam" id="1.25.40.10:FF:000991">
    <property type="entry name" value="Pentatricopeptide repeat-containing protein mitochondrial"/>
    <property type="match status" value="1"/>
</dbReference>
<dbReference type="Gene3D" id="1.25.40.10">
    <property type="entry name" value="Tetratricopeptide repeat domain"/>
    <property type="match status" value="3"/>
</dbReference>
<dbReference type="InterPro" id="IPR002885">
    <property type="entry name" value="Pentatricopeptide_rpt"/>
</dbReference>
<dbReference type="InterPro" id="IPR011990">
    <property type="entry name" value="TPR-like_helical_dom_sf"/>
</dbReference>
<dbReference type="NCBIfam" id="TIGR00756">
    <property type="entry name" value="PPR"/>
    <property type="match status" value="2"/>
</dbReference>
<dbReference type="PANTHER" id="PTHR45717">
    <property type="entry name" value="OS12G0527900 PROTEIN"/>
    <property type="match status" value="1"/>
</dbReference>
<dbReference type="PANTHER" id="PTHR45717:SF45">
    <property type="entry name" value="OS12G0527900 PROTEIN"/>
    <property type="match status" value="1"/>
</dbReference>
<dbReference type="Pfam" id="PF01535">
    <property type="entry name" value="PPR"/>
    <property type="match status" value="3"/>
</dbReference>
<dbReference type="Pfam" id="PF13041">
    <property type="entry name" value="PPR_2"/>
    <property type="match status" value="1"/>
</dbReference>
<dbReference type="SUPFAM" id="SSF48452">
    <property type="entry name" value="TPR-like"/>
    <property type="match status" value="1"/>
</dbReference>
<dbReference type="PROSITE" id="PS51375">
    <property type="entry name" value="PPR"/>
    <property type="match status" value="9"/>
</dbReference>
<feature type="transit peptide" description="Mitochondrion" evidence="1">
    <location>
        <begin position="1"/>
        <end position="28"/>
    </location>
</feature>
<feature type="chain" id="PRO_0000363420" description="Pentatricopeptide repeat-containing protein At4g02820, mitochondrial">
    <location>
        <begin position="29"/>
        <end position="532"/>
    </location>
</feature>
<feature type="repeat" description="PPR 1">
    <location>
        <begin position="161"/>
        <end position="195"/>
    </location>
</feature>
<feature type="repeat" description="PPR 2">
    <location>
        <begin position="196"/>
        <end position="226"/>
    </location>
</feature>
<feature type="repeat" description="PPR 3">
    <location>
        <begin position="230"/>
        <end position="264"/>
    </location>
</feature>
<feature type="repeat" description="PPR 4">
    <location>
        <begin position="265"/>
        <end position="295"/>
    </location>
</feature>
<feature type="repeat" description="PPR 5">
    <location>
        <begin position="300"/>
        <end position="330"/>
    </location>
</feature>
<feature type="repeat" description="PPR 6">
    <location>
        <begin position="335"/>
        <end position="365"/>
    </location>
</feature>
<feature type="repeat" description="PPR 7">
    <location>
        <begin position="370"/>
        <end position="404"/>
    </location>
</feature>
<feature type="repeat" description="PPR 8">
    <location>
        <begin position="405"/>
        <end position="435"/>
    </location>
</feature>
<feature type="repeat" description="PPR 9">
    <location>
        <begin position="442"/>
        <end position="472"/>
    </location>
</feature>
<feature type="repeat" description="PPR 10">
    <location>
        <begin position="476"/>
        <end position="512"/>
    </location>
</feature>
<feature type="region of interest" description="Disordered" evidence="2">
    <location>
        <begin position="35"/>
        <end position="56"/>
    </location>
</feature>
<feature type="sequence conflict" description="In Ref. 3; AAO00924/AAL32523." evidence="3" ref="3">
    <original>K</original>
    <variation>R</variation>
    <location>
        <position position="290"/>
    </location>
</feature>
<gene>
    <name type="ordered locus">At4g02820</name>
    <name type="ORF">T5J8.14</name>
</gene>
<sequence>MNKNMLVRSARPTLASIHRLFSAAAAATVDTATAPVVKPRSGGGKGGESANKKETVVGGRDTLGGRLLSLVYTKRSAVVTIRKWKEEGHSVRKYELNRIVRELRKIKRYKHALEICEWMVVQEDIKLQAGDYAVHLDLISKIRGLNSAEKFFEDMPDQMRGHAACTSLLHSYVQNKLSDKAEALFEKMGECGFLKSCLPYNHMLSMYISRGQFEKVPVLIKELKIRTSPDIVTYNLWLTAFASGNDVEGAEKVYLKAKEEKLNPDWVTYSVLTNLYAKTDNVEKARLALKEMEKLVSKKNRVAYASLISLHANLGDKDGVNLTWKKVKSSFKKMNDAEYLSMISAVVKLGEFEQAKGLYDEWESVSGTGDARIPNLILAEYMNRDEVLLGEKFYERIVEKGINPSYSTWEILTWAYLKRKDMEKVLDCFGKAIDSVKKWTVNVRLVKGACKELEEQGNVKGAEKLMTLLQKAGYVNTQLYNSLLRTYAKAGEMALIVEERMAKDNVELDEETKELIRLTSQMRVTEISSTIS</sequence>
<reference key="1">
    <citation type="journal article" date="1999" name="Nature">
        <title>Sequence and analysis of chromosome 4 of the plant Arabidopsis thaliana.</title>
        <authorList>
            <person name="Mayer K.F.X."/>
            <person name="Schueller C."/>
            <person name="Wambutt R."/>
            <person name="Murphy G."/>
            <person name="Volckaert G."/>
            <person name="Pohl T."/>
            <person name="Duesterhoeft A."/>
            <person name="Stiekema W."/>
            <person name="Entian K.-D."/>
            <person name="Terryn N."/>
            <person name="Harris B."/>
            <person name="Ansorge W."/>
            <person name="Brandt P."/>
            <person name="Grivell L.A."/>
            <person name="Rieger M."/>
            <person name="Weichselgartner M."/>
            <person name="de Simone V."/>
            <person name="Obermaier B."/>
            <person name="Mache R."/>
            <person name="Mueller M."/>
            <person name="Kreis M."/>
            <person name="Delseny M."/>
            <person name="Puigdomenech P."/>
            <person name="Watson M."/>
            <person name="Schmidtheini T."/>
            <person name="Reichert B."/>
            <person name="Portetelle D."/>
            <person name="Perez-Alonso M."/>
            <person name="Boutry M."/>
            <person name="Bancroft I."/>
            <person name="Vos P."/>
            <person name="Hoheisel J."/>
            <person name="Zimmermann W."/>
            <person name="Wedler H."/>
            <person name="Ridley P."/>
            <person name="Langham S.-A."/>
            <person name="McCullagh B."/>
            <person name="Bilham L."/>
            <person name="Robben J."/>
            <person name="van der Schueren J."/>
            <person name="Grymonprez B."/>
            <person name="Chuang Y.-J."/>
            <person name="Vandenbussche F."/>
            <person name="Braeken M."/>
            <person name="Weltjens I."/>
            <person name="Voet M."/>
            <person name="Bastiaens I."/>
            <person name="Aert R."/>
            <person name="Defoor E."/>
            <person name="Weitzenegger T."/>
            <person name="Bothe G."/>
            <person name="Ramsperger U."/>
            <person name="Hilbert H."/>
            <person name="Braun M."/>
            <person name="Holzer E."/>
            <person name="Brandt A."/>
            <person name="Peters S."/>
            <person name="van Staveren M."/>
            <person name="Dirkse W."/>
            <person name="Mooijman P."/>
            <person name="Klein Lankhorst R."/>
            <person name="Rose M."/>
            <person name="Hauf J."/>
            <person name="Koetter P."/>
            <person name="Berneiser S."/>
            <person name="Hempel S."/>
            <person name="Feldpausch M."/>
            <person name="Lamberth S."/>
            <person name="Van den Daele H."/>
            <person name="De Keyser A."/>
            <person name="Buysshaert C."/>
            <person name="Gielen J."/>
            <person name="Villarroel R."/>
            <person name="De Clercq R."/>
            <person name="van Montagu M."/>
            <person name="Rogers J."/>
            <person name="Cronin A."/>
            <person name="Quail M.A."/>
            <person name="Bray-Allen S."/>
            <person name="Clark L."/>
            <person name="Doggett J."/>
            <person name="Hall S."/>
            <person name="Kay M."/>
            <person name="Lennard N."/>
            <person name="McLay K."/>
            <person name="Mayes R."/>
            <person name="Pettett A."/>
            <person name="Rajandream M.A."/>
            <person name="Lyne M."/>
            <person name="Benes V."/>
            <person name="Rechmann S."/>
            <person name="Borkova D."/>
            <person name="Bloecker H."/>
            <person name="Scharfe M."/>
            <person name="Grimm M."/>
            <person name="Loehnert T.-H."/>
            <person name="Dose S."/>
            <person name="de Haan M."/>
            <person name="Maarse A.C."/>
            <person name="Schaefer M."/>
            <person name="Mueller-Auer S."/>
            <person name="Gabel C."/>
            <person name="Fuchs M."/>
            <person name="Fartmann B."/>
            <person name="Granderath K."/>
            <person name="Dauner D."/>
            <person name="Herzl A."/>
            <person name="Neumann S."/>
            <person name="Argiriou A."/>
            <person name="Vitale D."/>
            <person name="Liguori R."/>
            <person name="Piravandi E."/>
            <person name="Massenet O."/>
            <person name="Quigley F."/>
            <person name="Clabauld G."/>
            <person name="Muendlein A."/>
            <person name="Felber R."/>
            <person name="Schnabl S."/>
            <person name="Hiller R."/>
            <person name="Schmidt W."/>
            <person name="Lecharny A."/>
            <person name="Aubourg S."/>
            <person name="Chefdor F."/>
            <person name="Cooke R."/>
            <person name="Berger C."/>
            <person name="Monfort A."/>
            <person name="Casacuberta E."/>
            <person name="Gibbons T."/>
            <person name="Weber N."/>
            <person name="Vandenbol M."/>
            <person name="Bargues M."/>
            <person name="Terol J."/>
            <person name="Torres A."/>
            <person name="Perez-Perez A."/>
            <person name="Purnelle B."/>
            <person name="Bent E."/>
            <person name="Johnson S."/>
            <person name="Tacon D."/>
            <person name="Jesse T."/>
            <person name="Heijnen L."/>
            <person name="Schwarz S."/>
            <person name="Scholler P."/>
            <person name="Heber S."/>
            <person name="Francs P."/>
            <person name="Bielke C."/>
            <person name="Frishman D."/>
            <person name="Haase D."/>
            <person name="Lemcke K."/>
            <person name="Mewes H.-W."/>
            <person name="Stocker S."/>
            <person name="Zaccaria P."/>
            <person name="Bevan M."/>
            <person name="Wilson R.K."/>
            <person name="de la Bastide M."/>
            <person name="Habermann K."/>
            <person name="Parnell L."/>
            <person name="Dedhia N."/>
            <person name="Gnoj L."/>
            <person name="Schutz K."/>
            <person name="Huang E."/>
            <person name="Spiegel L."/>
            <person name="Sekhon M."/>
            <person name="Murray J."/>
            <person name="Sheet P."/>
            <person name="Cordes M."/>
            <person name="Abu-Threideh J."/>
            <person name="Stoneking T."/>
            <person name="Kalicki J."/>
            <person name="Graves T."/>
            <person name="Harmon G."/>
            <person name="Edwards J."/>
            <person name="Latreille P."/>
            <person name="Courtney L."/>
            <person name="Cloud J."/>
            <person name="Abbott A."/>
            <person name="Scott K."/>
            <person name="Johnson D."/>
            <person name="Minx P."/>
            <person name="Bentley D."/>
            <person name="Fulton B."/>
            <person name="Miller N."/>
            <person name="Greco T."/>
            <person name="Kemp K."/>
            <person name="Kramer J."/>
            <person name="Fulton L."/>
            <person name="Mardis E."/>
            <person name="Dante M."/>
            <person name="Pepin K."/>
            <person name="Hillier L.W."/>
            <person name="Nelson J."/>
            <person name="Spieth J."/>
            <person name="Ryan E."/>
            <person name="Andrews S."/>
            <person name="Geisel C."/>
            <person name="Layman D."/>
            <person name="Du H."/>
            <person name="Ali J."/>
            <person name="Berghoff A."/>
            <person name="Jones K."/>
            <person name="Drone K."/>
            <person name="Cotton M."/>
            <person name="Joshu C."/>
            <person name="Antonoiu B."/>
            <person name="Zidanic M."/>
            <person name="Strong C."/>
            <person name="Sun H."/>
            <person name="Lamar B."/>
            <person name="Yordan C."/>
            <person name="Ma P."/>
            <person name="Zhong J."/>
            <person name="Preston R."/>
            <person name="Vil D."/>
            <person name="Shekher M."/>
            <person name="Matero A."/>
            <person name="Shah R."/>
            <person name="Swaby I.K."/>
            <person name="O'Shaughnessy A."/>
            <person name="Rodriguez M."/>
            <person name="Hoffman J."/>
            <person name="Till S."/>
            <person name="Granat S."/>
            <person name="Shohdy N."/>
            <person name="Hasegawa A."/>
            <person name="Hameed A."/>
            <person name="Lodhi M."/>
            <person name="Johnson A."/>
            <person name="Chen E."/>
            <person name="Marra M.A."/>
            <person name="Martienssen R."/>
            <person name="McCombie W.R."/>
        </authorList>
    </citation>
    <scope>NUCLEOTIDE SEQUENCE [LARGE SCALE GENOMIC DNA]</scope>
    <source>
        <strain>cv. Columbia</strain>
    </source>
</reference>
<reference key="2">
    <citation type="journal article" date="2017" name="Plant J.">
        <title>Araport11: a complete reannotation of the Arabidopsis thaliana reference genome.</title>
        <authorList>
            <person name="Cheng C.Y."/>
            <person name="Krishnakumar V."/>
            <person name="Chan A.P."/>
            <person name="Thibaud-Nissen F."/>
            <person name="Schobel S."/>
            <person name="Town C.D."/>
        </authorList>
    </citation>
    <scope>GENOME REANNOTATION</scope>
    <source>
        <strain>cv. Columbia</strain>
    </source>
</reference>
<reference key="3">
    <citation type="journal article" date="2003" name="Science">
        <title>Empirical analysis of transcriptional activity in the Arabidopsis genome.</title>
        <authorList>
            <person name="Yamada K."/>
            <person name="Lim J."/>
            <person name="Dale J.M."/>
            <person name="Chen H."/>
            <person name="Shinn P."/>
            <person name="Palm C.J."/>
            <person name="Southwick A.M."/>
            <person name="Wu H.C."/>
            <person name="Kim C.J."/>
            <person name="Nguyen M."/>
            <person name="Pham P.K."/>
            <person name="Cheuk R.F."/>
            <person name="Karlin-Newmann G."/>
            <person name="Liu S.X."/>
            <person name="Lam B."/>
            <person name="Sakano H."/>
            <person name="Wu T."/>
            <person name="Yu G."/>
            <person name="Miranda M."/>
            <person name="Quach H.L."/>
            <person name="Tripp M."/>
            <person name="Chang C.H."/>
            <person name="Lee J.M."/>
            <person name="Toriumi M.J."/>
            <person name="Chan M.M."/>
            <person name="Tang C.C."/>
            <person name="Onodera C.S."/>
            <person name="Deng J.M."/>
            <person name="Akiyama K."/>
            <person name="Ansari Y."/>
            <person name="Arakawa T."/>
            <person name="Banh J."/>
            <person name="Banno F."/>
            <person name="Bowser L."/>
            <person name="Brooks S.Y."/>
            <person name="Carninci P."/>
            <person name="Chao Q."/>
            <person name="Choy N."/>
            <person name="Enju A."/>
            <person name="Goldsmith A.D."/>
            <person name="Gurjal M."/>
            <person name="Hansen N.F."/>
            <person name="Hayashizaki Y."/>
            <person name="Johnson-Hopson C."/>
            <person name="Hsuan V.W."/>
            <person name="Iida K."/>
            <person name="Karnes M."/>
            <person name="Khan S."/>
            <person name="Koesema E."/>
            <person name="Ishida J."/>
            <person name="Jiang P.X."/>
            <person name="Jones T."/>
            <person name="Kawai J."/>
            <person name="Kamiya A."/>
            <person name="Meyers C."/>
            <person name="Nakajima M."/>
            <person name="Narusaka M."/>
            <person name="Seki M."/>
            <person name="Sakurai T."/>
            <person name="Satou M."/>
            <person name="Tamse R."/>
            <person name="Vaysberg M."/>
            <person name="Wallender E.K."/>
            <person name="Wong C."/>
            <person name="Yamamura Y."/>
            <person name="Yuan S."/>
            <person name="Shinozaki K."/>
            <person name="Davis R.W."/>
            <person name="Theologis A."/>
            <person name="Ecker J.R."/>
        </authorList>
    </citation>
    <scope>NUCLEOTIDE SEQUENCE [LARGE SCALE MRNA]</scope>
    <source>
        <strain>cv. Columbia</strain>
    </source>
</reference>
<reference key="4">
    <citation type="journal article" date="2004" name="Plant Cell">
        <title>Genome-wide analysis of Arabidopsis pentatricopeptide repeat proteins reveals their essential role in organelle biogenesis.</title>
        <authorList>
            <person name="Lurin C."/>
            <person name="Andres C."/>
            <person name="Aubourg S."/>
            <person name="Bellaoui M."/>
            <person name="Bitton F."/>
            <person name="Bruyere C."/>
            <person name="Caboche M."/>
            <person name="Debast C."/>
            <person name="Gualberto J."/>
            <person name="Hoffmann B."/>
            <person name="Lecharny A."/>
            <person name="Le Ret M."/>
            <person name="Martin-Magniette M.-L."/>
            <person name="Mireau H."/>
            <person name="Peeters N."/>
            <person name="Renou J.-P."/>
            <person name="Szurek B."/>
            <person name="Taconnat L."/>
            <person name="Small I."/>
        </authorList>
    </citation>
    <scope>GENE FAMILY</scope>
</reference>